<feature type="chain" id="PRO_1000188536" description="Ribosomal RNA large subunit methyltransferase F">
    <location>
        <begin position="1"/>
        <end position="365"/>
    </location>
</feature>
<feature type="region of interest" description="Disordered" evidence="2">
    <location>
        <begin position="1"/>
        <end position="48"/>
    </location>
</feature>
<feature type="compositionally biased region" description="Basic and acidic residues" evidence="2">
    <location>
        <begin position="33"/>
        <end position="48"/>
    </location>
</feature>
<evidence type="ECO:0000255" key="1">
    <source>
        <dbReference type="HAMAP-Rule" id="MF_01848"/>
    </source>
</evidence>
<evidence type="ECO:0000256" key="2">
    <source>
        <dbReference type="SAM" id="MobiDB-lite"/>
    </source>
</evidence>
<comment type="function">
    <text evidence="1">Specifically methylates the adenine in position 1618 of 23S rRNA.</text>
</comment>
<comment type="catalytic activity">
    <reaction evidence="1">
        <text>adenosine(1618) in 23S rRNA + S-adenosyl-L-methionine = N(6)-methyladenosine(1618) in 23S rRNA + S-adenosyl-L-homocysteine + H(+)</text>
        <dbReference type="Rhea" id="RHEA:16497"/>
        <dbReference type="Rhea" id="RHEA-COMP:10229"/>
        <dbReference type="Rhea" id="RHEA-COMP:10231"/>
        <dbReference type="ChEBI" id="CHEBI:15378"/>
        <dbReference type="ChEBI" id="CHEBI:57856"/>
        <dbReference type="ChEBI" id="CHEBI:59789"/>
        <dbReference type="ChEBI" id="CHEBI:74411"/>
        <dbReference type="ChEBI" id="CHEBI:74449"/>
        <dbReference type="EC" id="2.1.1.181"/>
    </reaction>
</comment>
<comment type="subcellular location">
    <subcellularLocation>
        <location evidence="1">Cytoplasm</location>
    </subcellularLocation>
</comment>
<comment type="similarity">
    <text evidence="1">Belongs to the methyltransferase superfamily. METTL16/RlmF family.</text>
</comment>
<keyword id="KW-0963">Cytoplasm</keyword>
<keyword id="KW-0489">Methyltransferase</keyword>
<keyword id="KW-0698">rRNA processing</keyword>
<keyword id="KW-0949">S-adenosyl-L-methionine</keyword>
<keyword id="KW-0808">Transferase</keyword>
<proteinExistence type="inferred from homology"/>
<gene>
    <name evidence="1" type="primary">rlmF</name>
    <name type="ordered locus">Sbal223_0131</name>
</gene>
<organism>
    <name type="scientific">Shewanella baltica (strain OS223)</name>
    <dbReference type="NCBI Taxonomy" id="407976"/>
    <lineage>
        <taxon>Bacteria</taxon>
        <taxon>Pseudomonadati</taxon>
        <taxon>Pseudomonadota</taxon>
        <taxon>Gammaproteobacteria</taxon>
        <taxon>Alteromonadales</taxon>
        <taxon>Shewanellaceae</taxon>
        <taxon>Shewanella</taxon>
    </lineage>
</organism>
<dbReference type="EC" id="2.1.1.181" evidence="1"/>
<dbReference type="EMBL" id="CP001252">
    <property type="protein sequence ID" value="ACK44672.1"/>
    <property type="molecule type" value="Genomic_DNA"/>
</dbReference>
<dbReference type="RefSeq" id="WP_012586416.1">
    <property type="nucleotide sequence ID" value="NC_011663.1"/>
</dbReference>
<dbReference type="SMR" id="B8E3W0"/>
<dbReference type="KEGG" id="sbp:Sbal223_0131"/>
<dbReference type="HOGENOM" id="CLU_027534_3_0_6"/>
<dbReference type="Proteomes" id="UP000002507">
    <property type="component" value="Chromosome"/>
</dbReference>
<dbReference type="GO" id="GO:0005737">
    <property type="term" value="C:cytoplasm"/>
    <property type="evidence" value="ECO:0007669"/>
    <property type="project" value="UniProtKB-SubCell"/>
</dbReference>
<dbReference type="GO" id="GO:0052907">
    <property type="term" value="F:23S rRNA (adenine(1618)-N(6))-methyltransferase activity"/>
    <property type="evidence" value="ECO:0007669"/>
    <property type="project" value="UniProtKB-EC"/>
</dbReference>
<dbReference type="GO" id="GO:0070475">
    <property type="term" value="P:rRNA base methylation"/>
    <property type="evidence" value="ECO:0007669"/>
    <property type="project" value="TreeGrafter"/>
</dbReference>
<dbReference type="CDD" id="cd02440">
    <property type="entry name" value="AdoMet_MTases"/>
    <property type="match status" value="1"/>
</dbReference>
<dbReference type="Gene3D" id="3.40.50.150">
    <property type="entry name" value="Vaccinia Virus protein VP39"/>
    <property type="match status" value="1"/>
</dbReference>
<dbReference type="HAMAP" id="MF_01848">
    <property type="entry name" value="23SrRNA_methyltr_F"/>
    <property type="match status" value="1"/>
</dbReference>
<dbReference type="InterPro" id="IPR010286">
    <property type="entry name" value="METTL16/RlmF"/>
</dbReference>
<dbReference type="InterPro" id="IPR016909">
    <property type="entry name" value="rRNA_lsu_MeTfrase_F"/>
</dbReference>
<dbReference type="InterPro" id="IPR029063">
    <property type="entry name" value="SAM-dependent_MTases_sf"/>
</dbReference>
<dbReference type="NCBIfam" id="NF008725">
    <property type="entry name" value="PRK11727.1"/>
    <property type="match status" value="1"/>
</dbReference>
<dbReference type="PANTHER" id="PTHR13393:SF0">
    <property type="entry name" value="RNA N6-ADENOSINE-METHYLTRANSFERASE METTL16"/>
    <property type="match status" value="1"/>
</dbReference>
<dbReference type="PANTHER" id="PTHR13393">
    <property type="entry name" value="SAM-DEPENDENT METHYLTRANSFERASE"/>
    <property type="match status" value="1"/>
</dbReference>
<dbReference type="Pfam" id="PF05971">
    <property type="entry name" value="Methyltransf_10"/>
    <property type="match status" value="1"/>
</dbReference>
<dbReference type="PIRSF" id="PIRSF029038">
    <property type="entry name" value="Mtase_YbiN_prd"/>
    <property type="match status" value="1"/>
</dbReference>
<dbReference type="SUPFAM" id="SSF53335">
    <property type="entry name" value="S-adenosyl-L-methionine-dependent methyltransferases"/>
    <property type="match status" value="1"/>
</dbReference>
<accession>B8E3W0</accession>
<protein>
    <recommendedName>
        <fullName evidence="1">Ribosomal RNA large subunit methyltransferase F</fullName>
        <ecNumber evidence="1">2.1.1.181</ecNumber>
    </recommendedName>
    <alternativeName>
        <fullName evidence="1">23S rRNA mA1618 methyltransferase</fullName>
    </alternativeName>
    <alternativeName>
        <fullName evidence="1">rRNA adenine N-6-methyltransferase</fullName>
    </alternativeName>
</protein>
<sequence>MSKPAVKSVQSATAKTATRAVNIRQKVKAPKQAKPEGKGSTKPVKDRPRVEIKKALHPRNAHLNGYDFPALISAFPRLKTFVRPTPYGALSIDFADPLAVKTLNAALLKHHYGIGAWDIPQGALCPPIPGRVDYVHYVADLLAEGDKSCAISKARVLDIGTGANGIYPILGSQVYGWQFVASDISAHSLTNVQSIIEQNPALQGRISLRLQPDDKAVFKGIVQPEERFELTLCNPPFHASMAEASEGTKRKVNNLQLNRGSSVKAAPKLNFGGQAAELWCQGGERQFLATMIRESQMFADQCLWFTSLVSKQENLKPCYQALAQLKVDTVKTIEMQQGNKITRVLAWSFQSAAKRKLWRAEHLAR</sequence>
<name>RLMF_SHEB2</name>
<reference key="1">
    <citation type="submission" date="2008-12" db="EMBL/GenBank/DDBJ databases">
        <title>Complete sequence of chromosome of Shewanella baltica OS223.</title>
        <authorList>
            <consortium name="US DOE Joint Genome Institute"/>
            <person name="Lucas S."/>
            <person name="Copeland A."/>
            <person name="Lapidus A."/>
            <person name="Glavina del Rio T."/>
            <person name="Dalin E."/>
            <person name="Tice H."/>
            <person name="Bruce D."/>
            <person name="Goodwin L."/>
            <person name="Pitluck S."/>
            <person name="Chertkov O."/>
            <person name="Meincke L."/>
            <person name="Brettin T."/>
            <person name="Detter J.C."/>
            <person name="Han C."/>
            <person name="Kuske C.R."/>
            <person name="Larimer F."/>
            <person name="Land M."/>
            <person name="Hauser L."/>
            <person name="Kyrpides N."/>
            <person name="Ovchinnikova G."/>
            <person name="Brettar I."/>
            <person name="Rodrigues J."/>
            <person name="Konstantinidis K."/>
            <person name="Tiedje J."/>
        </authorList>
    </citation>
    <scope>NUCLEOTIDE SEQUENCE [LARGE SCALE GENOMIC DNA]</scope>
    <source>
        <strain>OS223</strain>
    </source>
</reference>